<gene>
    <name type="primary">NYV1</name>
    <name type="synonym">MAM2</name>
    <name type="ordered locus">YLR093C</name>
</gene>
<dbReference type="EMBL" id="Z73265">
    <property type="protein sequence ID" value="CAA97654.1"/>
    <property type="status" value="ALT_SEQ"/>
    <property type="molecule type" value="Genomic_DNA"/>
</dbReference>
<dbReference type="EMBL" id="U53876">
    <property type="protein sequence ID" value="AAB67537.1"/>
    <property type="status" value="ALT_SEQ"/>
    <property type="molecule type" value="Genomic_DNA"/>
</dbReference>
<dbReference type="EMBL" id="AY692786">
    <property type="protein sequence ID" value="AAT92805.1"/>
    <property type="status" value="ALT_SEQ"/>
    <property type="molecule type" value="Genomic_DNA"/>
</dbReference>
<dbReference type="EMBL" id="BK006945">
    <property type="protein sequence ID" value="DAA09409.1"/>
    <property type="molecule type" value="Genomic_DNA"/>
</dbReference>
<dbReference type="PIR" id="S64927">
    <property type="entry name" value="S64927"/>
</dbReference>
<dbReference type="RefSeq" id="NP_013194.2">
    <property type="nucleotide sequence ID" value="NM_001181980.1"/>
</dbReference>
<dbReference type="PDB" id="2FZ0">
    <property type="method" value="NMR"/>
    <property type="chains" value="A=1-149"/>
</dbReference>
<dbReference type="PDBsum" id="2FZ0"/>
<dbReference type="SMR" id="Q12255"/>
<dbReference type="BioGRID" id="31366">
    <property type="interactions" value="114"/>
</dbReference>
<dbReference type="ComplexPortal" id="CPX-5401">
    <property type="entry name" value="Vacuolar SNARE complex VAM3-VTI1-VAM7-NYV1"/>
</dbReference>
<dbReference type="ComplexPortal" id="CPX-5521">
    <property type="entry name" value="Vacuolar SNARE complex SSO1-SEC9-NYV1"/>
</dbReference>
<dbReference type="DIP" id="DIP-2248N"/>
<dbReference type="FunCoup" id="Q12255">
    <property type="interactions" value="83"/>
</dbReference>
<dbReference type="IntAct" id="Q12255">
    <property type="interactions" value="44"/>
</dbReference>
<dbReference type="MINT" id="Q12255"/>
<dbReference type="STRING" id="4932.YLR093C"/>
<dbReference type="TCDB" id="1.F.1.1.2">
    <property type="family name" value="the synaptosomal vesicle fusion pore (svf-pore) family"/>
</dbReference>
<dbReference type="iPTMnet" id="Q12255"/>
<dbReference type="PaxDb" id="4932-YLR093C"/>
<dbReference type="PeptideAtlas" id="Q12255"/>
<dbReference type="TopDownProteomics" id="Q12255"/>
<dbReference type="EnsemblFungi" id="YLR093C_mRNA">
    <property type="protein sequence ID" value="YLR093C"/>
    <property type="gene ID" value="YLR093C"/>
</dbReference>
<dbReference type="GeneID" id="850782"/>
<dbReference type="KEGG" id="sce:YLR093C"/>
<dbReference type="AGR" id="SGD:S000004083"/>
<dbReference type="SGD" id="S000004083">
    <property type="gene designation" value="NYV1"/>
</dbReference>
<dbReference type="VEuPathDB" id="FungiDB:YLR093C"/>
<dbReference type="eggNOG" id="KOG0860">
    <property type="taxonomic scope" value="Eukaryota"/>
</dbReference>
<dbReference type="HOGENOM" id="CLU_1107824_0_0_1"/>
<dbReference type="InParanoid" id="Q12255"/>
<dbReference type="OMA" id="DGYDCYY"/>
<dbReference type="OrthoDB" id="190375at2759"/>
<dbReference type="BioCyc" id="YEAST:G3O-32243-MONOMER"/>
<dbReference type="Reactome" id="R-SCE-199992">
    <property type="pathway name" value="trans-Golgi Network Vesicle Budding"/>
</dbReference>
<dbReference type="BioGRID-ORCS" id="850782">
    <property type="hits" value="2 hits in 10 CRISPR screens"/>
</dbReference>
<dbReference type="EvolutionaryTrace" id="Q12255"/>
<dbReference type="PRO" id="PR:Q12255"/>
<dbReference type="Proteomes" id="UP000002311">
    <property type="component" value="Chromosome XII"/>
</dbReference>
<dbReference type="RNAct" id="Q12255">
    <property type="molecule type" value="protein"/>
</dbReference>
<dbReference type="GO" id="GO:0000329">
    <property type="term" value="C:fungal-type vacuole membrane"/>
    <property type="evidence" value="ECO:0000314"/>
    <property type="project" value="SGD"/>
</dbReference>
<dbReference type="GO" id="GO:0005886">
    <property type="term" value="C:plasma membrane"/>
    <property type="evidence" value="ECO:0000303"/>
    <property type="project" value="ComplexPortal"/>
</dbReference>
<dbReference type="GO" id="GO:0031201">
    <property type="term" value="C:SNARE complex"/>
    <property type="evidence" value="ECO:0000314"/>
    <property type="project" value="ComplexPortal"/>
</dbReference>
<dbReference type="GO" id="GO:0005774">
    <property type="term" value="C:vacuolar membrane"/>
    <property type="evidence" value="ECO:0000314"/>
    <property type="project" value="ComplexPortal"/>
</dbReference>
<dbReference type="GO" id="GO:0005484">
    <property type="term" value="F:SNAP receptor activity"/>
    <property type="evidence" value="ECO:0000314"/>
    <property type="project" value="SGD"/>
</dbReference>
<dbReference type="GO" id="GO:0006886">
    <property type="term" value="P:intracellular protein transport"/>
    <property type="evidence" value="ECO:0000303"/>
    <property type="project" value="ComplexPortal"/>
</dbReference>
<dbReference type="GO" id="GO:0007036">
    <property type="term" value="P:vacuolar calcium ion homeostasis"/>
    <property type="evidence" value="ECO:0000314"/>
    <property type="project" value="ComplexPortal"/>
</dbReference>
<dbReference type="GO" id="GO:0042144">
    <property type="term" value="P:vacuole fusion, non-autophagic"/>
    <property type="evidence" value="ECO:0000314"/>
    <property type="project" value="SGD"/>
</dbReference>
<dbReference type="GO" id="GO:0006906">
    <property type="term" value="P:vesicle fusion"/>
    <property type="evidence" value="ECO:0000314"/>
    <property type="project" value="ComplexPortal"/>
</dbReference>
<dbReference type="GO" id="GO:0099500">
    <property type="term" value="P:vesicle fusion to plasma membrane"/>
    <property type="evidence" value="ECO:0000303"/>
    <property type="project" value="ComplexPortal"/>
</dbReference>
<dbReference type="GO" id="GO:0016192">
    <property type="term" value="P:vesicle-mediated transport"/>
    <property type="evidence" value="ECO:0000315"/>
    <property type="project" value="SGD"/>
</dbReference>
<dbReference type="CDD" id="cd15843">
    <property type="entry name" value="R-SNARE"/>
    <property type="match status" value="1"/>
</dbReference>
<dbReference type="FunFam" id="1.20.5.110:FF:000116">
    <property type="entry name" value="Vacuolar v-SNARE"/>
    <property type="match status" value="1"/>
</dbReference>
<dbReference type="FunFam" id="3.30.450.230:FF:000001">
    <property type="entry name" value="Vacuolar v-SNARE"/>
    <property type="match status" value="1"/>
</dbReference>
<dbReference type="Gene3D" id="1.20.5.110">
    <property type="match status" value="1"/>
</dbReference>
<dbReference type="Gene3D" id="3.30.450.230">
    <property type="entry name" value="Vacuolar R-SNARE Nyv1, longin domain"/>
    <property type="match status" value="1"/>
</dbReference>
<dbReference type="InterPro" id="IPR038426">
    <property type="entry name" value="Nyv1_longin_sf"/>
</dbReference>
<dbReference type="InterPro" id="IPR001388">
    <property type="entry name" value="Synaptobrevin-like"/>
</dbReference>
<dbReference type="InterPro" id="IPR016444">
    <property type="entry name" value="Synaptobrevin/VAMP"/>
</dbReference>
<dbReference type="InterPro" id="IPR042855">
    <property type="entry name" value="V_SNARE_CC"/>
</dbReference>
<dbReference type="InterPro" id="IPR019005">
    <property type="entry name" value="Vacuolar_R-SNAR_Nyv1_longi_dom"/>
</dbReference>
<dbReference type="PANTHER" id="PTHR45701">
    <property type="entry name" value="SYNAPTOBREVIN FAMILY MEMBER"/>
    <property type="match status" value="1"/>
</dbReference>
<dbReference type="Pfam" id="PF09426">
    <property type="entry name" value="Nyv1_longin"/>
    <property type="match status" value="1"/>
</dbReference>
<dbReference type="Pfam" id="PF00957">
    <property type="entry name" value="Synaptobrevin"/>
    <property type="match status" value="1"/>
</dbReference>
<dbReference type="PRINTS" id="PR00219">
    <property type="entry name" value="SYNAPTOBREVN"/>
</dbReference>
<dbReference type="SUPFAM" id="SSF58038">
    <property type="entry name" value="SNARE fusion complex"/>
    <property type="match status" value="1"/>
</dbReference>
<dbReference type="PROSITE" id="PS50892">
    <property type="entry name" value="V_SNARE"/>
    <property type="match status" value="1"/>
</dbReference>
<organism>
    <name type="scientific">Saccharomyces cerevisiae (strain ATCC 204508 / S288c)</name>
    <name type="common">Baker's yeast</name>
    <dbReference type="NCBI Taxonomy" id="559292"/>
    <lineage>
        <taxon>Eukaryota</taxon>
        <taxon>Fungi</taxon>
        <taxon>Dikarya</taxon>
        <taxon>Ascomycota</taxon>
        <taxon>Saccharomycotina</taxon>
        <taxon>Saccharomycetes</taxon>
        <taxon>Saccharomycetales</taxon>
        <taxon>Saccharomycetaceae</taxon>
        <taxon>Saccharomyces</taxon>
    </lineage>
</organism>
<protein>
    <recommendedName>
        <fullName>Vacuolar v-SNARE NYV1</fullName>
        <shortName>R-SNARE NYV1</shortName>
    </recommendedName>
    <alternativeName>
        <fullName>New v-SNARE 1</fullName>
    </alternativeName>
    <alternativeName>
        <fullName>Synaptobrevin NYV1</fullName>
    </alternativeName>
</protein>
<reference key="1">
    <citation type="journal article" date="1997" name="Nature">
        <title>The nucleotide sequence of Saccharomyces cerevisiae chromosome XII.</title>
        <authorList>
            <person name="Johnston M."/>
            <person name="Hillier L.W."/>
            <person name="Riles L."/>
            <person name="Albermann K."/>
            <person name="Andre B."/>
            <person name="Ansorge W."/>
            <person name="Benes V."/>
            <person name="Brueckner M."/>
            <person name="Delius H."/>
            <person name="Dubois E."/>
            <person name="Duesterhoeft A."/>
            <person name="Entian K.-D."/>
            <person name="Floeth M."/>
            <person name="Goffeau A."/>
            <person name="Hebling U."/>
            <person name="Heumann K."/>
            <person name="Heuss-Neitzel D."/>
            <person name="Hilbert H."/>
            <person name="Hilger F."/>
            <person name="Kleine K."/>
            <person name="Koetter P."/>
            <person name="Louis E.J."/>
            <person name="Messenguy F."/>
            <person name="Mewes H.-W."/>
            <person name="Miosga T."/>
            <person name="Moestl D."/>
            <person name="Mueller-Auer S."/>
            <person name="Nentwich U."/>
            <person name="Obermaier B."/>
            <person name="Piravandi E."/>
            <person name="Pohl T.M."/>
            <person name="Portetelle D."/>
            <person name="Purnelle B."/>
            <person name="Rechmann S."/>
            <person name="Rieger M."/>
            <person name="Rinke M."/>
            <person name="Rose M."/>
            <person name="Scharfe M."/>
            <person name="Scherens B."/>
            <person name="Scholler P."/>
            <person name="Schwager C."/>
            <person name="Schwarz S."/>
            <person name="Underwood A.P."/>
            <person name="Urrestarazu L.A."/>
            <person name="Vandenbol M."/>
            <person name="Verhasselt P."/>
            <person name="Vierendeels F."/>
            <person name="Voet M."/>
            <person name="Volckaert G."/>
            <person name="Voss H."/>
            <person name="Wambutt R."/>
            <person name="Wedler E."/>
            <person name="Wedler H."/>
            <person name="Zimmermann F.K."/>
            <person name="Zollner A."/>
            <person name="Hani J."/>
            <person name="Hoheisel J.D."/>
        </authorList>
    </citation>
    <scope>NUCLEOTIDE SEQUENCE [LARGE SCALE GENOMIC DNA]</scope>
    <source>
        <strain>ATCC 204508 / S288c</strain>
    </source>
</reference>
<reference key="2">
    <citation type="journal article" date="2014" name="G3 (Bethesda)">
        <title>The reference genome sequence of Saccharomyces cerevisiae: Then and now.</title>
        <authorList>
            <person name="Engel S.R."/>
            <person name="Dietrich F.S."/>
            <person name="Fisk D.G."/>
            <person name="Binkley G."/>
            <person name="Balakrishnan R."/>
            <person name="Costanzo M.C."/>
            <person name="Dwight S.S."/>
            <person name="Hitz B.C."/>
            <person name="Karra K."/>
            <person name="Nash R.S."/>
            <person name="Weng S."/>
            <person name="Wong E.D."/>
            <person name="Lloyd P."/>
            <person name="Skrzypek M.S."/>
            <person name="Miyasato S.R."/>
            <person name="Simison M."/>
            <person name="Cherry J.M."/>
        </authorList>
    </citation>
    <scope>GENOME REANNOTATION</scope>
    <source>
        <strain>ATCC 204508 / S288c</strain>
    </source>
</reference>
<reference key="3">
    <citation type="journal article" date="2007" name="Genome Res.">
        <title>Approaching a complete repository of sequence-verified protein-encoding clones for Saccharomyces cerevisiae.</title>
        <authorList>
            <person name="Hu Y."/>
            <person name="Rolfs A."/>
            <person name="Bhullar B."/>
            <person name="Murthy T.V.S."/>
            <person name="Zhu C."/>
            <person name="Berger M.F."/>
            <person name="Camargo A.A."/>
            <person name="Kelley F."/>
            <person name="McCarron S."/>
            <person name="Jepson D."/>
            <person name="Richardson A."/>
            <person name="Raphael J."/>
            <person name="Moreira D."/>
            <person name="Taycher E."/>
            <person name="Zuo D."/>
            <person name="Mohr S."/>
            <person name="Kane M.F."/>
            <person name="Williamson J."/>
            <person name="Simpson A.J.G."/>
            <person name="Bulyk M.L."/>
            <person name="Harlow E."/>
            <person name="Marsischky G."/>
            <person name="Kolodner R.D."/>
            <person name="LaBaer J."/>
        </authorList>
    </citation>
    <scope>NUCLEOTIDE SEQUENCE [GENOMIC DNA]</scope>
    <source>
        <strain>ATCC 204508 / S288c</strain>
    </source>
</reference>
<reference key="4">
    <citation type="submission" date="2005-05" db="UniProtKB">
        <authorList>
            <person name="Bienvenut W.V."/>
            <person name="Peters C."/>
        </authorList>
    </citation>
    <scope>PROTEIN SEQUENCE OF 14-27; 108-143 AND 196-214</scope>
    <scope>IDENTIFICATION BY MASS SPECTROMETRY</scope>
</reference>
<reference key="5">
    <citation type="journal article" date="1997" name="Nature">
        <title>Homotypic vacuolar fusion mediated by t- and v-SNAREs.</title>
        <authorList>
            <person name="Nichols B.J."/>
            <person name="Ungermann C."/>
            <person name="Pelham H.R.B."/>
            <person name="Wickner W.T."/>
            <person name="Haas A."/>
        </authorList>
    </citation>
    <scope>FUNCTION</scope>
    <scope>INTERACTION WITH VAM3</scope>
</reference>
<reference key="6">
    <citation type="journal article" date="1999" name="J. Cell Biol.">
        <title>Three v-SNAREs and two t-SNAREs, present in a pentameric cis-SNARE complex on isolated vacuoles, are essential for homotypic fusion.</title>
        <authorList>
            <person name="Ungermann C."/>
            <person name="Fischer von Mollard G."/>
            <person name="Jensen O.N."/>
            <person name="Margolis N."/>
            <person name="Stevens T.H."/>
            <person name="Wickner W.T."/>
        </authorList>
    </citation>
    <scope>FUNCTION</scope>
    <scope>SUBUNIT</scope>
</reference>
<reference key="7">
    <citation type="journal article" date="2000" name="Nucleic Acids Res.">
        <title>Test of intron predictions reveals novel splice sites, alternatively spliced mRNAs and new introns in meiotically regulated genes of yeast.</title>
        <authorList>
            <person name="Davis C.A."/>
            <person name="Grate L."/>
            <person name="Spingola M."/>
            <person name="Ares M. Jr."/>
        </authorList>
    </citation>
    <scope>IDENTIFICATION OF INTRON</scope>
</reference>
<reference key="8">
    <citation type="journal article" date="2001" name="J. Biol. Chem.">
        <title>Inhibition of the Ca(2+)-ATPase Pmc1p by the v-SNARE protein Nyv1p.</title>
        <authorList>
            <person name="Takita Y."/>
            <person name="Engstrom L."/>
            <person name="Ungermann C."/>
            <person name="Cunningham K.W."/>
        </authorList>
    </citation>
    <scope>FUNCTION</scope>
    <scope>INTERACTION WITH PMC1</scope>
</reference>
<reference key="9">
    <citation type="journal article" date="2002" name="EMBO J.">
        <title>The Vtc proteins in vacuole fusion: coupling NSF activity to V(0) trans-complex formation.</title>
        <authorList>
            <person name="Mueller O."/>
            <person name="Bayer M.J."/>
            <person name="Peters C."/>
            <person name="Andersen J.S."/>
            <person name="Mann M."/>
            <person name="Mayer A."/>
        </authorList>
    </citation>
    <scope>INTERACTION WITH THE VTC COMPLEX</scope>
</reference>
<reference key="10">
    <citation type="journal article" date="2004" name="J. Cell Biol.">
        <title>Trans-SNARE interactions elicit Ca2+ efflux from the yeast vacuole lumen.</title>
        <authorList>
            <person name="Merz A.J."/>
            <person name="Wickner W.T."/>
        </authorList>
    </citation>
    <scope>FUNCTION</scope>
</reference>
<reference key="11">
    <citation type="journal article" date="2003" name="Nature">
        <title>Global analysis of protein localization in budding yeast.</title>
        <authorList>
            <person name="Huh W.-K."/>
            <person name="Falvo J.V."/>
            <person name="Gerke L.C."/>
            <person name="Carroll A.S."/>
            <person name="Howson R.W."/>
            <person name="Weissman J.S."/>
            <person name="O'Shea E.K."/>
        </authorList>
    </citation>
    <scope>SUBCELLULAR LOCATION [LARGE SCALE ANALYSIS]</scope>
</reference>
<reference key="12">
    <citation type="journal article" date="2003" name="Nature">
        <title>Global analysis of protein expression in yeast.</title>
        <authorList>
            <person name="Ghaemmaghami S."/>
            <person name="Huh W.-K."/>
            <person name="Bower K."/>
            <person name="Howson R.W."/>
            <person name="Belle A."/>
            <person name="Dephoure N."/>
            <person name="O'Shea E.K."/>
            <person name="Weissman J.S."/>
        </authorList>
    </citation>
    <scope>LEVEL OF PROTEIN EXPRESSION [LARGE SCALE ANALYSIS]</scope>
</reference>
<reference key="13">
    <citation type="journal article" date="2006" name="Mol. Biol. Cell">
        <title>Identification of the yeast R-SNARE Nyv1p as a novel longin domain-containing protein.</title>
        <authorList>
            <person name="Wen W."/>
            <person name="Chen L."/>
            <person name="Wu H."/>
            <person name="Sun X."/>
            <person name="Zhang M."/>
            <person name="Banfield D.K."/>
        </authorList>
    </citation>
    <scope>STRUCTURE BY NMR OF 1-149</scope>
</reference>
<feature type="chain" id="PRO_0000206780" description="Vacuolar v-SNARE NYV1">
    <location>
        <begin position="1"/>
        <end position="253"/>
    </location>
</feature>
<feature type="topological domain" description="Cytoplasmic" evidence="1">
    <location>
        <begin position="1"/>
        <end position="231"/>
    </location>
</feature>
<feature type="transmembrane region" description="Helical; Anchor for type IV membrane protein" evidence="1">
    <location>
        <begin position="232"/>
        <end position="252"/>
    </location>
</feature>
<feature type="topological domain" description="Vacuolar" evidence="1">
    <location>
        <position position="253"/>
    </location>
</feature>
<feature type="domain" description="v-SNARE coiled-coil homology" evidence="2">
    <location>
        <begin position="167"/>
        <end position="227"/>
    </location>
</feature>
<feature type="region of interest" description="Disordered" evidence="3">
    <location>
        <begin position="147"/>
        <end position="166"/>
    </location>
</feature>
<feature type="compositionally biased region" description="Low complexity" evidence="3">
    <location>
        <begin position="148"/>
        <end position="162"/>
    </location>
</feature>
<feature type="strand" evidence="12">
    <location>
        <begin position="7"/>
        <end position="16"/>
    </location>
</feature>
<feature type="strand" evidence="12">
    <location>
        <begin position="20"/>
        <end position="22"/>
    </location>
</feature>
<feature type="strand" evidence="12">
    <location>
        <begin position="26"/>
        <end position="30"/>
    </location>
</feature>
<feature type="helix" evidence="12">
    <location>
        <begin position="43"/>
        <end position="52"/>
    </location>
</feature>
<feature type="helix" evidence="12">
    <location>
        <begin position="55"/>
        <end position="57"/>
    </location>
</feature>
<feature type="strand" evidence="12">
    <location>
        <begin position="65"/>
        <end position="68"/>
    </location>
</feature>
<feature type="strand" evidence="12">
    <location>
        <begin position="74"/>
        <end position="81"/>
    </location>
</feature>
<feature type="strand" evidence="12">
    <location>
        <begin position="90"/>
        <end position="97"/>
    </location>
</feature>
<feature type="helix" evidence="12">
    <location>
        <begin position="104"/>
        <end position="112"/>
    </location>
</feature>
<feature type="helix" evidence="12">
    <location>
        <begin position="124"/>
        <end position="141"/>
    </location>
</feature>
<feature type="turn" evidence="12">
    <location>
        <begin position="142"/>
        <end position="144"/>
    </location>
</feature>
<keyword id="KW-0002">3D-structure</keyword>
<keyword id="KW-0175">Coiled coil</keyword>
<keyword id="KW-0903">Direct protein sequencing</keyword>
<keyword id="KW-0472">Membrane</keyword>
<keyword id="KW-1185">Reference proteome</keyword>
<keyword id="KW-0812">Transmembrane</keyword>
<keyword id="KW-1133">Transmembrane helix</keyword>
<keyword id="KW-0926">Vacuole</keyword>
<proteinExistence type="evidence at protein level"/>
<evidence type="ECO:0000255" key="1"/>
<evidence type="ECO:0000255" key="2">
    <source>
        <dbReference type="PROSITE-ProRule" id="PRU00290"/>
    </source>
</evidence>
<evidence type="ECO:0000256" key="3">
    <source>
        <dbReference type="SAM" id="MobiDB-lite"/>
    </source>
</evidence>
<evidence type="ECO:0000269" key="4">
    <source>
    </source>
</evidence>
<evidence type="ECO:0000269" key="5">
    <source>
    </source>
</evidence>
<evidence type="ECO:0000269" key="6">
    <source>
    </source>
</evidence>
<evidence type="ECO:0000269" key="7">
    <source>
    </source>
</evidence>
<evidence type="ECO:0000269" key="8">
    <source>
    </source>
</evidence>
<evidence type="ECO:0000269" key="9">
    <source>
    </source>
</evidence>
<evidence type="ECO:0000269" key="10">
    <source>
    </source>
</evidence>
<evidence type="ECO:0000305" key="11"/>
<evidence type="ECO:0007829" key="12">
    <source>
        <dbReference type="PDB" id="2FZ0"/>
    </source>
</evidence>
<accession>Q12255</accession>
<accession>D6VY93</accession>
<sequence length="253" mass="28964">MKRFNVSYVEVIKNGETISSCFQPFQKNENYGTITSANEQITPVIFHNLIMDMVLPKVVPIKGNKVTKMSMNLIDGFDCFYSTDDHDPKTVYVCFTLVDMPKILPIRILSGLQEYESNATNELLSSHVGQILDSFHEELVEYRNQTLNSSGNGQSSNGNGQNTISDIGDATEDQIKDVIQIMNDNIDKFLERQERVSLLVDKTSQLNSSSNKFRRKAVNIKEIMWWQKVKNITLLTFTIILFVSAAFMFFYLW</sequence>
<name>NYV1_YEAST</name>
<comment type="function">
    <text evidence="4 5 9 10">Vacuolar v-SNARE required for docking. Only involved in homotypic vacuole fusion. Required for Ca(2+) efflux from the vacuolar lumen, a required signal for subsequent membrane fusion events, by inhibiting vacuolar Ca(2+)-ATPase PMC1 and promoting Ca(2+) release when forming trans-SNARE assemblies during the docking step.</text>
</comment>
<comment type="subunit">
    <text evidence="4 5 6 10">Present in a pentameric cis-SNARE complex composed of the v-SNAREs NYV1, VTI1 and YKT6, and the t-SNAREs VAM3 and VAM7 on vacuolar membranes. Interacts in trans with the cognate t-SNARE VAM3 during the docking step of homotypic vacuolar fusion. Interacts with the vacuolar transporter chaperone (VTC) complex and the vacuolar Ca(2+)-ATPase PMC1.</text>
</comment>
<comment type="interaction">
    <interactant intactId="EBI-35465">
        <id>Q12255</id>
    </interactant>
    <interactant intactId="EBI-2989">
        <id>Q12154</id>
        <label>GET3</label>
    </interactant>
    <organismsDiffer>false</organismsDiffer>
    <experiments>3</experiments>
</comment>
<comment type="interaction">
    <interactant intactId="EBI-35465">
        <id>Q12255</id>
    </interactant>
    <interactant intactId="EBI-20227">
        <id>Q12241</id>
        <label>VAM3</label>
    </interactant>
    <organismsDiffer>false</organismsDiffer>
    <experiments>21</experiments>
</comment>
<comment type="interaction">
    <interactant intactId="EBI-35465">
        <id>Q12255</id>
    </interactant>
    <interactant intactId="EBI-20232">
        <id>P32912</id>
        <label>VAM7</label>
    </interactant>
    <organismsDiffer>false</organismsDiffer>
    <experiments>11</experiments>
</comment>
<comment type="interaction">
    <interactant intactId="EBI-35465">
        <id>Q12255</id>
    </interactant>
    <interactant intactId="EBI-20513">
        <id>P40046</id>
        <label>VTC1</label>
    </interactant>
    <organismsDiffer>false</organismsDiffer>
    <experiments>2</experiments>
</comment>
<comment type="interaction">
    <interactant intactId="EBI-35465">
        <id>Q12255</id>
    </interactant>
    <interactant intactId="EBI-20519">
        <id>Q04338</id>
        <label>VTI1</label>
    </interactant>
    <organismsDiffer>false</organismsDiffer>
    <experiments>11</experiments>
</comment>
<comment type="subcellular location">
    <subcellularLocation>
        <location evidence="7">Vacuole membrane</location>
        <topology evidence="7">Single-pass type IV membrane protein</topology>
    </subcellularLocation>
</comment>
<comment type="miscellaneous">
    <text evidence="8">Present with 1885 molecules/cell in log phase SD medium.</text>
</comment>
<comment type="similarity">
    <text evidence="11">Belongs to the synaptobrevin family.</text>
</comment>
<comment type="sequence caution" evidence="11">
    <conflict type="erroneous gene model prediction">
        <sequence resource="EMBL-CDS" id="AAB67537"/>
    </conflict>
</comment>
<comment type="sequence caution" evidence="11">
    <conflict type="erroneous gene model prediction">
        <sequence resource="EMBL-CDS" id="AAT92805"/>
    </conflict>
</comment>
<comment type="sequence caution" evidence="11">
    <conflict type="erroneous gene model prediction">
        <sequence resource="EMBL-CDS" id="CAA97654"/>
    </conflict>
</comment>